<proteinExistence type="inferred from homology"/>
<dbReference type="EMBL" id="AP008937">
    <property type="protein sequence ID" value="BAG26345.1"/>
    <property type="molecule type" value="Genomic_DNA"/>
</dbReference>
<dbReference type="RefSeq" id="WP_003682305.1">
    <property type="nucleotide sequence ID" value="NC_010610.1"/>
</dbReference>
<dbReference type="SMR" id="B2GEV6"/>
<dbReference type="GeneID" id="83715697"/>
<dbReference type="KEGG" id="lfe:LAF_0009"/>
<dbReference type="eggNOG" id="COG0238">
    <property type="taxonomic scope" value="Bacteria"/>
</dbReference>
<dbReference type="HOGENOM" id="CLU_148710_2_2_9"/>
<dbReference type="Proteomes" id="UP000001697">
    <property type="component" value="Chromosome"/>
</dbReference>
<dbReference type="GO" id="GO:0022627">
    <property type="term" value="C:cytosolic small ribosomal subunit"/>
    <property type="evidence" value="ECO:0007669"/>
    <property type="project" value="TreeGrafter"/>
</dbReference>
<dbReference type="GO" id="GO:0070181">
    <property type="term" value="F:small ribosomal subunit rRNA binding"/>
    <property type="evidence" value="ECO:0007669"/>
    <property type="project" value="TreeGrafter"/>
</dbReference>
<dbReference type="GO" id="GO:0003735">
    <property type="term" value="F:structural constituent of ribosome"/>
    <property type="evidence" value="ECO:0007669"/>
    <property type="project" value="InterPro"/>
</dbReference>
<dbReference type="GO" id="GO:0006412">
    <property type="term" value="P:translation"/>
    <property type="evidence" value="ECO:0007669"/>
    <property type="project" value="UniProtKB-UniRule"/>
</dbReference>
<dbReference type="FunFam" id="4.10.640.10:FF:000003">
    <property type="entry name" value="30S ribosomal protein S18"/>
    <property type="match status" value="1"/>
</dbReference>
<dbReference type="Gene3D" id="4.10.640.10">
    <property type="entry name" value="Ribosomal protein S18"/>
    <property type="match status" value="1"/>
</dbReference>
<dbReference type="HAMAP" id="MF_00270">
    <property type="entry name" value="Ribosomal_bS18"/>
    <property type="match status" value="1"/>
</dbReference>
<dbReference type="InterPro" id="IPR001648">
    <property type="entry name" value="Ribosomal_bS18"/>
</dbReference>
<dbReference type="InterPro" id="IPR018275">
    <property type="entry name" value="Ribosomal_bS18_CS"/>
</dbReference>
<dbReference type="InterPro" id="IPR036870">
    <property type="entry name" value="Ribosomal_bS18_sf"/>
</dbReference>
<dbReference type="NCBIfam" id="TIGR00165">
    <property type="entry name" value="S18"/>
    <property type="match status" value="1"/>
</dbReference>
<dbReference type="PANTHER" id="PTHR13479">
    <property type="entry name" value="30S RIBOSOMAL PROTEIN S18"/>
    <property type="match status" value="1"/>
</dbReference>
<dbReference type="PANTHER" id="PTHR13479:SF40">
    <property type="entry name" value="SMALL RIBOSOMAL SUBUNIT PROTEIN BS18M"/>
    <property type="match status" value="1"/>
</dbReference>
<dbReference type="Pfam" id="PF01084">
    <property type="entry name" value="Ribosomal_S18"/>
    <property type="match status" value="1"/>
</dbReference>
<dbReference type="PRINTS" id="PR00974">
    <property type="entry name" value="RIBOSOMALS18"/>
</dbReference>
<dbReference type="SUPFAM" id="SSF46911">
    <property type="entry name" value="Ribosomal protein S18"/>
    <property type="match status" value="1"/>
</dbReference>
<dbReference type="PROSITE" id="PS00057">
    <property type="entry name" value="RIBOSOMAL_S18"/>
    <property type="match status" value="1"/>
</dbReference>
<keyword id="KW-1185">Reference proteome</keyword>
<keyword id="KW-0687">Ribonucleoprotein</keyword>
<keyword id="KW-0689">Ribosomal protein</keyword>
<keyword id="KW-0694">RNA-binding</keyword>
<keyword id="KW-0699">rRNA-binding</keyword>
<protein>
    <recommendedName>
        <fullName evidence="1">Small ribosomal subunit protein bS18</fullName>
    </recommendedName>
    <alternativeName>
        <fullName evidence="2">30S ribosomal protein S18</fullName>
    </alternativeName>
</protein>
<organism>
    <name type="scientific">Limosilactobacillus fermentum (strain NBRC 3956 / LMG 18251)</name>
    <name type="common">Lactobacillus fermentum</name>
    <dbReference type="NCBI Taxonomy" id="334390"/>
    <lineage>
        <taxon>Bacteria</taxon>
        <taxon>Bacillati</taxon>
        <taxon>Bacillota</taxon>
        <taxon>Bacilli</taxon>
        <taxon>Lactobacillales</taxon>
        <taxon>Lactobacillaceae</taxon>
        <taxon>Limosilactobacillus</taxon>
    </lineage>
</organism>
<feature type="chain" id="PRO_1000114428" description="Small ribosomal subunit protein bS18">
    <location>
        <begin position="1"/>
        <end position="78"/>
    </location>
</feature>
<gene>
    <name evidence="1" type="primary">rpsR</name>
    <name type="ordered locus">LAF_0009</name>
</gene>
<name>RS18_LIMF3</name>
<reference key="1">
    <citation type="journal article" date="2008" name="DNA Res.">
        <title>Comparative genome analysis of Lactobacillus reuteri and Lactobacillus fermentum reveal a genomic island for reuterin and cobalamin production.</title>
        <authorList>
            <person name="Morita H."/>
            <person name="Toh H."/>
            <person name="Fukuda S."/>
            <person name="Horikawa H."/>
            <person name="Oshima K."/>
            <person name="Suzuki T."/>
            <person name="Murakami M."/>
            <person name="Hisamatsu S."/>
            <person name="Kato Y."/>
            <person name="Takizawa T."/>
            <person name="Fukuoka H."/>
            <person name="Yoshimura T."/>
            <person name="Itoh K."/>
            <person name="O'Sullivan D.J."/>
            <person name="McKay L.L."/>
            <person name="Ohno H."/>
            <person name="Kikuchi J."/>
            <person name="Masaoka T."/>
            <person name="Hattori M."/>
        </authorList>
    </citation>
    <scope>NUCLEOTIDE SEQUENCE [LARGE SCALE GENOMIC DNA]</scope>
    <source>
        <strain>NBRC 3956 / LMG 18251</strain>
    </source>
</reference>
<accession>B2GEV6</accession>
<comment type="function">
    <text evidence="1">Binds as a heterodimer with protein bS6 to the central domain of the 16S rRNA, where it helps stabilize the platform of the 30S subunit.</text>
</comment>
<comment type="subunit">
    <text evidence="1">Part of the 30S ribosomal subunit. Forms a tight heterodimer with protein bS6.</text>
</comment>
<comment type="similarity">
    <text evidence="1">Belongs to the bacterial ribosomal protein bS18 family.</text>
</comment>
<evidence type="ECO:0000255" key="1">
    <source>
        <dbReference type="HAMAP-Rule" id="MF_00270"/>
    </source>
</evidence>
<evidence type="ECO:0000305" key="2"/>
<sequence length="78" mass="9182">MAQQRRGGRRRRKVDFIAANHIEYIDYKDTDLLRRFISERGKILPRRVTGTSAKNQRRLTIAIKRARIMGLLPFVAED</sequence>